<gene>
    <name evidence="1" type="primary">folD</name>
    <name type="ordered locus">BURPS668_2616</name>
</gene>
<keyword id="KW-0028">Amino-acid biosynthesis</keyword>
<keyword id="KW-0368">Histidine biosynthesis</keyword>
<keyword id="KW-0378">Hydrolase</keyword>
<keyword id="KW-0486">Methionine biosynthesis</keyword>
<keyword id="KW-0511">Multifunctional enzyme</keyword>
<keyword id="KW-0521">NADP</keyword>
<keyword id="KW-0554">One-carbon metabolism</keyword>
<keyword id="KW-0560">Oxidoreductase</keyword>
<keyword id="KW-0658">Purine biosynthesis</keyword>
<feature type="chain" id="PRO_1000069232" description="Bifunctional protein FolD">
    <location>
        <begin position="1"/>
        <end position="285"/>
    </location>
</feature>
<feature type="binding site" evidence="1">
    <location>
        <begin position="165"/>
        <end position="167"/>
    </location>
    <ligand>
        <name>NADP(+)</name>
        <dbReference type="ChEBI" id="CHEBI:58349"/>
    </ligand>
</feature>
<feature type="binding site" evidence="1">
    <location>
        <position position="190"/>
    </location>
    <ligand>
        <name>NADP(+)</name>
        <dbReference type="ChEBI" id="CHEBI:58349"/>
    </ligand>
</feature>
<comment type="function">
    <text evidence="1">Catalyzes the oxidation of 5,10-methylenetetrahydrofolate to 5,10-methenyltetrahydrofolate and then the hydrolysis of 5,10-methenyltetrahydrofolate to 10-formyltetrahydrofolate.</text>
</comment>
<comment type="catalytic activity">
    <reaction evidence="1">
        <text>(6R)-5,10-methylene-5,6,7,8-tetrahydrofolate + NADP(+) = (6R)-5,10-methenyltetrahydrofolate + NADPH</text>
        <dbReference type="Rhea" id="RHEA:22812"/>
        <dbReference type="ChEBI" id="CHEBI:15636"/>
        <dbReference type="ChEBI" id="CHEBI:57455"/>
        <dbReference type="ChEBI" id="CHEBI:57783"/>
        <dbReference type="ChEBI" id="CHEBI:58349"/>
        <dbReference type="EC" id="1.5.1.5"/>
    </reaction>
</comment>
<comment type="catalytic activity">
    <reaction evidence="1">
        <text>(6R)-5,10-methenyltetrahydrofolate + H2O = (6R)-10-formyltetrahydrofolate + H(+)</text>
        <dbReference type="Rhea" id="RHEA:23700"/>
        <dbReference type="ChEBI" id="CHEBI:15377"/>
        <dbReference type="ChEBI" id="CHEBI:15378"/>
        <dbReference type="ChEBI" id="CHEBI:57455"/>
        <dbReference type="ChEBI" id="CHEBI:195366"/>
        <dbReference type="EC" id="3.5.4.9"/>
    </reaction>
</comment>
<comment type="pathway">
    <text evidence="1">One-carbon metabolism; tetrahydrofolate interconversion.</text>
</comment>
<comment type="subunit">
    <text evidence="1">Homodimer.</text>
</comment>
<comment type="similarity">
    <text evidence="1">Belongs to the tetrahydrofolate dehydrogenase/cyclohydrolase family.</text>
</comment>
<proteinExistence type="inferred from homology"/>
<reference key="1">
    <citation type="journal article" date="2010" name="Genome Biol. Evol.">
        <title>Continuing evolution of Burkholderia mallei through genome reduction and large-scale rearrangements.</title>
        <authorList>
            <person name="Losada L."/>
            <person name="Ronning C.M."/>
            <person name="DeShazer D."/>
            <person name="Woods D."/>
            <person name="Fedorova N."/>
            <person name="Kim H.S."/>
            <person name="Shabalina S.A."/>
            <person name="Pearson T.R."/>
            <person name="Brinkac L."/>
            <person name="Tan P."/>
            <person name="Nandi T."/>
            <person name="Crabtree J."/>
            <person name="Badger J."/>
            <person name="Beckstrom-Sternberg S."/>
            <person name="Saqib M."/>
            <person name="Schutzer S.E."/>
            <person name="Keim P."/>
            <person name="Nierman W.C."/>
        </authorList>
    </citation>
    <scope>NUCLEOTIDE SEQUENCE [LARGE SCALE GENOMIC DNA]</scope>
    <source>
        <strain>668</strain>
    </source>
</reference>
<name>FOLD_BURP6</name>
<accession>A3NBC0</accession>
<evidence type="ECO:0000255" key="1">
    <source>
        <dbReference type="HAMAP-Rule" id="MF_01576"/>
    </source>
</evidence>
<protein>
    <recommendedName>
        <fullName evidence="1">Bifunctional protein FolD</fullName>
    </recommendedName>
    <domain>
        <recommendedName>
            <fullName evidence="1">Methylenetetrahydrofolate dehydrogenase</fullName>
            <ecNumber evidence="1">1.5.1.5</ecNumber>
        </recommendedName>
    </domain>
    <domain>
        <recommendedName>
            <fullName evidence="1">Methenyltetrahydrofolate cyclohydrolase</fullName>
            <ecNumber evidence="1">3.5.4.9</ecNumber>
        </recommendedName>
    </domain>
</protein>
<organism>
    <name type="scientific">Burkholderia pseudomallei (strain 668)</name>
    <dbReference type="NCBI Taxonomy" id="320373"/>
    <lineage>
        <taxon>Bacteria</taxon>
        <taxon>Pseudomonadati</taxon>
        <taxon>Pseudomonadota</taxon>
        <taxon>Betaproteobacteria</taxon>
        <taxon>Burkholderiales</taxon>
        <taxon>Burkholderiaceae</taxon>
        <taxon>Burkholderia</taxon>
        <taxon>pseudomallei group</taxon>
    </lineage>
</organism>
<sequence length="285" mass="29926">MTATLIDGNALSKTLRAQAAERAAALAARGHRPGLAVILVGDNPASEVYVRNKIKACEDNGFFSLKDRYPATLSEPELLARIDELNRDPKIHGILVQLPLPAHIDSHKVIEAIAPEKDVDGFHVANAGALLTGKPLFRPCTPYGVMKMFEAYKIPLQGANAVVIGRSNIVGKPMALLLLEAGATVTICHSKTRELAAHTRAADIVVAAVGKRNVLTADMVKPGATVIDVGMNRNDEGKLCGDVDFAGVSQVAGHITPVPGGVGPMTITMLLVNTIEAAERAAAAA</sequence>
<dbReference type="EC" id="1.5.1.5" evidence="1"/>
<dbReference type="EC" id="3.5.4.9" evidence="1"/>
<dbReference type="EMBL" id="CP000570">
    <property type="protein sequence ID" value="ABN82864.1"/>
    <property type="molecule type" value="Genomic_DNA"/>
</dbReference>
<dbReference type="RefSeq" id="WP_004524717.1">
    <property type="nucleotide sequence ID" value="NC_009074.1"/>
</dbReference>
<dbReference type="SMR" id="A3NBC0"/>
<dbReference type="KEGG" id="bpd:BURPS668_2616"/>
<dbReference type="HOGENOM" id="CLU_034045_2_1_4"/>
<dbReference type="UniPathway" id="UPA00193"/>
<dbReference type="GO" id="GO:0005829">
    <property type="term" value="C:cytosol"/>
    <property type="evidence" value="ECO:0007669"/>
    <property type="project" value="TreeGrafter"/>
</dbReference>
<dbReference type="GO" id="GO:0004477">
    <property type="term" value="F:methenyltetrahydrofolate cyclohydrolase activity"/>
    <property type="evidence" value="ECO:0007669"/>
    <property type="project" value="UniProtKB-UniRule"/>
</dbReference>
<dbReference type="GO" id="GO:0004488">
    <property type="term" value="F:methylenetetrahydrofolate dehydrogenase (NADP+) activity"/>
    <property type="evidence" value="ECO:0007669"/>
    <property type="project" value="UniProtKB-UniRule"/>
</dbReference>
<dbReference type="GO" id="GO:0000105">
    <property type="term" value="P:L-histidine biosynthetic process"/>
    <property type="evidence" value="ECO:0007669"/>
    <property type="project" value="UniProtKB-KW"/>
</dbReference>
<dbReference type="GO" id="GO:0009086">
    <property type="term" value="P:methionine biosynthetic process"/>
    <property type="evidence" value="ECO:0007669"/>
    <property type="project" value="UniProtKB-KW"/>
</dbReference>
<dbReference type="GO" id="GO:0006164">
    <property type="term" value="P:purine nucleotide biosynthetic process"/>
    <property type="evidence" value="ECO:0007669"/>
    <property type="project" value="UniProtKB-KW"/>
</dbReference>
<dbReference type="GO" id="GO:0035999">
    <property type="term" value="P:tetrahydrofolate interconversion"/>
    <property type="evidence" value="ECO:0007669"/>
    <property type="project" value="UniProtKB-UniRule"/>
</dbReference>
<dbReference type="CDD" id="cd01080">
    <property type="entry name" value="NAD_bind_m-THF_DH_Cyclohyd"/>
    <property type="match status" value="1"/>
</dbReference>
<dbReference type="FunFam" id="3.40.50.720:FF:000094">
    <property type="entry name" value="Bifunctional protein FolD"/>
    <property type="match status" value="1"/>
</dbReference>
<dbReference type="FunFam" id="3.40.50.10860:FF:000005">
    <property type="entry name" value="C-1-tetrahydrofolate synthase, cytoplasmic, putative"/>
    <property type="match status" value="1"/>
</dbReference>
<dbReference type="Gene3D" id="3.40.50.10860">
    <property type="entry name" value="Leucine Dehydrogenase, chain A, domain 1"/>
    <property type="match status" value="1"/>
</dbReference>
<dbReference type="Gene3D" id="3.40.50.720">
    <property type="entry name" value="NAD(P)-binding Rossmann-like Domain"/>
    <property type="match status" value="1"/>
</dbReference>
<dbReference type="HAMAP" id="MF_01576">
    <property type="entry name" value="THF_DHG_CYH"/>
    <property type="match status" value="1"/>
</dbReference>
<dbReference type="InterPro" id="IPR046346">
    <property type="entry name" value="Aminoacid_DH-like_N_sf"/>
</dbReference>
<dbReference type="InterPro" id="IPR036291">
    <property type="entry name" value="NAD(P)-bd_dom_sf"/>
</dbReference>
<dbReference type="InterPro" id="IPR000672">
    <property type="entry name" value="THF_DH/CycHdrlase"/>
</dbReference>
<dbReference type="InterPro" id="IPR020630">
    <property type="entry name" value="THF_DH/CycHdrlase_cat_dom"/>
</dbReference>
<dbReference type="InterPro" id="IPR020867">
    <property type="entry name" value="THF_DH/CycHdrlase_CS"/>
</dbReference>
<dbReference type="InterPro" id="IPR020631">
    <property type="entry name" value="THF_DH/CycHdrlase_NAD-bd_dom"/>
</dbReference>
<dbReference type="NCBIfam" id="NF008058">
    <property type="entry name" value="PRK10792.1"/>
    <property type="match status" value="1"/>
</dbReference>
<dbReference type="NCBIfam" id="NF010783">
    <property type="entry name" value="PRK14186.1"/>
    <property type="match status" value="1"/>
</dbReference>
<dbReference type="NCBIfam" id="NF010786">
    <property type="entry name" value="PRK14189.1"/>
    <property type="match status" value="1"/>
</dbReference>
<dbReference type="PANTHER" id="PTHR48099:SF5">
    <property type="entry name" value="C-1-TETRAHYDROFOLATE SYNTHASE, CYTOPLASMIC"/>
    <property type="match status" value="1"/>
</dbReference>
<dbReference type="PANTHER" id="PTHR48099">
    <property type="entry name" value="C-1-TETRAHYDROFOLATE SYNTHASE, CYTOPLASMIC-RELATED"/>
    <property type="match status" value="1"/>
</dbReference>
<dbReference type="Pfam" id="PF00763">
    <property type="entry name" value="THF_DHG_CYH"/>
    <property type="match status" value="1"/>
</dbReference>
<dbReference type="Pfam" id="PF02882">
    <property type="entry name" value="THF_DHG_CYH_C"/>
    <property type="match status" value="1"/>
</dbReference>
<dbReference type="PRINTS" id="PR00085">
    <property type="entry name" value="THFDHDRGNASE"/>
</dbReference>
<dbReference type="SUPFAM" id="SSF53223">
    <property type="entry name" value="Aminoacid dehydrogenase-like, N-terminal domain"/>
    <property type="match status" value="1"/>
</dbReference>
<dbReference type="SUPFAM" id="SSF51735">
    <property type="entry name" value="NAD(P)-binding Rossmann-fold domains"/>
    <property type="match status" value="1"/>
</dbReference>
<dbReference type="PROSITE" id="PS00766">
    <property type="entry name" value="THF_DHG_CYH_1"/>
    <property type="match status" value="1"/>
</dbReference>
<dbReference type="PROSITE" id="PS00767">
    <property type="entry name" value="THF_DHG_CYH_2"/>
    <property type="match status" value="1"/>
</dbReference>